<gene>
    <name type="ordered locus">YGL072C</name>
</gene>
<sequence>MGAGIFFSSLCALRDQLREHTILNDYIRYLMTLPCVLFLSSFGQAVIVVLCRVLYFDYSRFRYFLHKSFLSVLGRRVGLGGITVVIKAWQVITHFSVFSGAELYIGGHPCTSLTSVIVV</sequence>
<keyword id="KW-0472">Membrane</keyword>
<keyword id="KW-0812">Transmembrane</keyword>
<keyword id="KW-1133">Transmembrane helix</keyword>
<dbReference type="EMBL" id="Z72596">
    <property type="protein sequence ID" value="CAA96778.1"/>
    <property type="molecule type" value="Genomic_DNA"/>
</dbReference>
<dbReference type="EMBL" id="AY693238">
    <property type="protein sequence ID" value="AAT93257.1"/>
    <property type="molecule type" value="Genomic_DNA"/>
</dbReference>
<dbReference type="PIR" id="S64079">
    <property type="entry name" value="S64079"/>
</dbReference>
<dbReference type="SMR" id="P53161"/>
<dbReference type="IntAct" id="P53161">
    <property type="interactions" value="1"/>
</dbReference>
<dbReference type="MINT" id="P53161"/>
<dbReference type="STRING" id="4932.YGL072C"/>
<dbReference type="PaxDb" id="4932-YGL072C"/>
<dbReference type="EnsemblFungi" id="YGL072C_mRNA">
    <property type="protein sequence ID" value="YGL072C"/>
    <property type="gene ID" value="YGL072C"/>
</dbReference>
<dbReference type="AGR" id="SGD:S000003040"/>
<dbReference type="SGD" id="S000003040">
    <property type="gene designation" value="YGL072C"/>
</dbReference>
<dbReference type="HOGENOM" id="CLU_2063315_0_0_1"/>
<dbReference type="GO" id="GO:0016020">
    <property type="term" value="C:membrane"/>
    <property type="evidence" value="ECO:0007669"/>
    <property type="project" value="UniProtKB-SubCell"/>
</dbReference>
<reference key="1">
    <citation type="journal article" date="1997" name="Yeast">
        <title>Sequence analysis of 203 kilobases from Saccharomyces cerevisiae chromosome VII.</title>
        <authorList>
            <person name="Rieger M."/>
            <person name="Brueckner M."/>
            <person name="Schaefer M."/>
            <person name="Mueller-Auer S."/>
        </authorList>
    </citation>
    <scope>NUCLEOTIDE SEQUENCE [GENOMIC DNA]</scope>
    <source>
        <strain>ATCC 204508 / S288c</strain>
    </source>
</reference>
<reference key="2">
    <citation type="journal article" date="1997" name="Nature">
        <title>The nucleotide sequence of Saccharomyces cerevisiae chromosome VII.</title>
        <authorList>
            <person name="Tettelin H."/>
            <person name="Agostoni-Carbone M.L."/>
            <person name="Albermann K."/>
            <person name="Albers M."/>
            <person name="Arroyo J."/>
            <person name="Backes U."/>
            <person name="Barreiros T."/>
            <person name="Bertani I."/>
            <person name="Bjourson A.J."/>
            <person name="Brueckner M."/>
            <person name="Bruschi C.V."/>
            <person name="Carignani G."/>
            <person name="Castagnoli L."/>
            <person name="Cerdan E."/>
            <person name="Clemente M.L."/>
            <person name="Coblenz A."/>
            <person name="Coglievina M."/>
            <person name="Coissac E."/>
            <person name="Defoor E."/>
            <person name="Del Bino S."/>
            <person name="Delius H."/>
            <person name="Delneri D."/>
            <person name="de Wergifosse P."/>
            <person name="Dujon B."/>
            <person name="Durand P."/>
            <person name="Entian K.-D."/>
            <person name="Eraso P."/>
            <person name="Escribano V."/>
            <person name="Fabiani L."/>
            <person name="Fartmann B."/>
            <person name="Feroli F."/>
            <person name="Feuermann M."/>
            <person name="Frontali L."/>
            <person name="Garcia-Gonzalez M."/>
            <person name="Garcia-Saez M.I."/>
            <person name="Goffeau A."/>
            <person name="Guerreiro P."/>
            <person name="Hani J."/>
            <person name="Hansen M."/>
            <person name="Hebling U."/>
            <person name="Hernandez K."/>
            <person name="Heumann K."/>
            <person name="Hilger F."/>
            <person name="Hofmann B."/>
            <person name="Indge K.J."/>
            <person name="James C.M."/>
            <person name="Klima R."/>
            <person name="Koetter P."/>
            <person name="Kramer B."/>
            <person name="Kramer W."/>
            <person name="Lauquin G."/>
            <person name="Leuther H."/>
            <person name="Louis E.J."/>
            <person name="Maillier E."/>
            <person name="Marconi A."/>
            <person name="Martegani E."/>
            <person name="Mazon M.J."/>
            <person name="Mazzoni C."/>
            <person name="McReynolds A.D.K."/>
            <person name="Melchioretto P."/>
            <person name="Mewes H.-W."/>
            <person name="Minenkova O."/>
            <person name="Mueller-Auer S."/>
            <person name="Nawrocki A."/>
            <person name="Netter P."/>
            <person name="Neu R."/>
            <person name="Nombela C."/>
            <person name="Oliver S.G."/>
            <person name="Panzeri L."/>
            <person name="Paoluzi S."/>
            <person name="Plevani P."/>
            <person name="Portetelle D."/>
            <person name="Portillo F."/>
            <person name="Potier S."/>
            <person name="Purnelle B."/>
            <person name="Rieger M."/>
            <person name="Riles L."/>
            <person name="Rinaldi T."/>
            <person name="Robben J."/>
            <person name="Rodrigues-Pousada C."/>
            <person name="Rodriguez-Belmonte E."/>
            <person name="Rodriguez-Torres A.M."/>
            <person name="Rose M."/>
            <person name="Ruzzi M."/>
            <person name="Saliola M."/>
            <person name="Sanchez-Perez M."/>
            <person name="Schaefer B."/>
            <person name="Schaefer M."/>
            <person name="Scharfe M."/>
            <person name="Schmidheini T."/>
            <person name="Schreer A."/>
            <person name="Skala J."/>
            <person name="Souciet J.-L."/>
            <person name="Steensma H.Y."/>
            <person name="Talla E."/>
            <person name="Thierry A."/>
            <person name="Vandenbol M."/>
            <person name="van der Aart Q.J.M."/>
            <person name="Van Dyck L."/>
            <person name="Vanoni M."/>
            <person name="Verhasselt P."/>
            <person name="Voet M."/>
            <person name="Volckaert G."/>
            <person name="Wambutt R."/>
            <person name="Watson M.D."/>
            <person name="Weber N."/>
            <person name="Wedler E."/>
            <person name="Wedler H."/>
            <person name="Wipfli P."/>
            <person name="Wolf K."/>
            <person name="Wright L.F."/>
            <person name="Zaccaria P."/>
            <person name="Zimmermann M."/>
            <person name="Zollner A."/>
            <person name="Kleine K."/>
        </authorList>
    </citation>
    <scope>NUCLEOTIDE SEQUENCE [LARGE SCALE GENOMIC DNA]</scope>
    <source>
        <strain>ATCC 204508 / S288c</strain>
    </source>
</reference>
<reference key="3">
    <citation type="journal article" date="2014" name="G3 (Bethesda)">
        <title>The reference genome sequence of Saccharomyces cerevisiae: Then and now.</title>
        <authorList>
            <person name="Engel S.R."/>
            <person name="Dietrich F.S."/>
            <person name="Fisk D.G."/>
            <person name="Binkley G."/>
            <person name="Balakrishnan R."/>
            <person name="Costanzo M.C."/>
            <person name="Dwight S.S."/>
            <person name="Hitz B.C."/>
            <person name="Karra K."/>
            <person name="Nash R.S."/>
            <person name="Weng S."/>
            <person name="Wong E.D."/>
            <person name="Lloyd P."/>
            <person name="Skrzypek M.S."/>
            <person name="Miyasato S.R."/>
            <person name="Simison M."/>
            <person name="Cherry J.M."/>
        </authorList>
    </citation>
    <scope>GENOME REANNOTATION</scope>
    <source>
        <strain>ATCC 204508 / S288c</strain>
    </source>
</reference>
<reference key="4">
    <citation type="journal article" date="2007" name="Genome Res.">
        <title>Approaching a complete repository of sequence-verified protein-encoding clones for Saccharomyces cerevisiae.</title>
        <authorList>
            <person name="Hu Y."/>
            <person name="Rolfs A."/>
            <person name="Bhullar B."/>
            <person name="Murthy T.V.S."/>
            <person name="Zhu C."/>
            <person name="Berger M.F."/>
            <person name="Camargo A.A."/>
            <person name="Kelley F."/>
            <person name="McCarron S."/>
            <person name="Jepson D."/>
            <person name="Richardson A."/>
            <person name="Raphael J."/>
            <person name="Moreira D."/>
            <person name="Taycher E."/>
            <person name="Zuo D."/>
            <person name="Mohr S."/>
            <person name="Kane M.F."/>
            <person name="Williamson J."/>
            <person name="Simpson A.J.G."/>
            <person name="Bulyk M.L."/>
            <person name="Harlow E."/>
            <person name="Marsischky G."/>
            <person name="Kolodner R.D."/>
            <person name="LaBaer J."/>
        </authorList>
    </citation>
    <scope>NUCLEOTIDE SEQUENCE [GENOMIC DNA]</scope>
    <source>
        <strain>ATCC 204508 / S288c</strain>
    </source>
</reference>
<evidence type="ECO:0000255" key="1"/>
<evidence type="ECO:0000305" key="2"/>
<evidence type="ECO:0000305" key="3">
    <source>
    </source>
</evidence>
<protein>
    <recommendedName>
        <fullName>Putative uncharacterized protein YGL072C</fullName>
    </recommendedName>
</protein>
<name>YGH2_YEAST</name>
<proteinExistence type="uncertain"/>
<comment type="subcellular location">
    <subcellularLocation>
        <location evidence="2">Membrane</location>
        <topology evidence="2">Single-pass membrane protein</topology>
    </subcellularLocation>
</comment>
<comment type="miscellaneous">
    <text evidence="2">Partially overlaps HSF1.</text>
</comment>
<comment type="caution">
    <text evidence="3">Product of a dubious gene prediction unlikely to encode a functional protein. Because of that it is not part of the S.cerevisiae S288c complete/reference proteome set.</text>
</comment>
<accession>P53161</accession>
<organism>
    <name type="scientific">Saccharomyces cerevisiae (strain ATCC 204508 / S288c)</name>
    <name type="common">Baker's yeast</name>
    <dbReference type="NCBI Taxonomy" id="559292"/>
    <lineage>
        <taxon>Eukaryota</taxon>
        <taxon>Fungi</taxon>
        <taxon>Dikarya</taxon>
        <taxon>Ascomycota</taxon>
        <taxon>Saccharomycotina</taxon>
        <taxon>Saccharomycetes</taxon>
        <taxon>Saccharomycetales</taxon>
        <taxon>Saccharomycetaceae</taxon>
        <taxon>Saccharomyces</taxon>
    </lineage>
</organism>
<feature type="chain" id="PRO_0000202762" description="Putative uncharacterized protein YGL072C">
    <location>
        <begin position="1"/>
        <end position="119"/>
    </location>
</feature>
<feature type="transmembrane region" description="Helical" evidence="1">
    <location>
        <begin position="30"/>
        <end position="50"/>
    </location>
</feature>